<protein>
    <recommendedName>
        <fullName evidence="1">High frequency lysogenization protein HflD homolog</fullName>
    </recommendedName>
</protein>
<sequence length="217" mass="25163">MGKNFYSIMLSLAGICQSIVLVNQLSETGECHSKSFEICIDSMLNLYPTTVLSIYGNKEKNLKLGITTLMSLLNVNAILKCKNSIKMIRYIFNLITLENRLENNIKYKNILFKELSILIQQHKNRVYTYDLLADRLAQIYLDTVSKLGFRIQVSGSKKVLHNIVIQNKIRCILLSGIRATMLWKQIGGRRYQFVFYRNSIFHYADMILKKINDTKYS</sequence>
<gene>
    <name evidence="1" type="primary">hflD</name>
    <name type="ordered locus">bbp_243</name>
</gene>
<evidence type="ECO:0000255" key="1">
    <source>
        <dbReference type="HAMAP-Rule" id="MF_00695"/>
    </source>
</evidence>
<evidence type="ECO:0000305" key="2"/>
<feature type="chain" id="PRO_0000071575" description="High frequency lysogenization protein HflD homolog">
    <location>
        <begin position="1"/>
        <end position="217"/>
    </location>
</feature>
<reference key="1">
    <citation type="journal article" date="2003" name="Proc. Natl. Acad. Sci. U.S.A.">
        <title>Reductive genome evolution in Buchnera aphidicola.</title>
        <authorList>
            <person name="van Ham R.C.H.J."/>
            <person name="Kamerbeek J."/>
            <person name="Palacios C."/>
            <person name="Rausell C."/>
            <person name="Abascal F."/>
            <person name="Bastolla U."/>
            <person name="Fernandez J.M."/>
            <person name="Jimenez L."/>
            <person name="Postigo M."/>
            <person name="Silva F.J."/>
            <person name="Tamames J."/>
            <person name="Viguera E."/>
            <person name="Latorre A."/>
            <person name="Valencia A."/>
            <person name="Moran F."/>
            <person name="Moya A."/>
        </authorList>
    </citation>
    <scope>NUCLEOTIDE SEQUENCE [LARGE SCALE GENOMIC DNA]</scope>
    <source>
        <strain>Bp</strain>
    </source>
</reference>
<name>HFLD_BUCBP</name>
<keyword id="KW-1003">Cell membrane</keyword>
<keyword id="KW-0963">Cytoplasm</keyword>
<keyword id="KW-0472">Membrane</keyword>
<keyword id="KW-1185">Reference proteome</keyword>
<dbReference type="EMBL" id="AE016826">
    <property type="protein sequence ID" value="AAO26970.1"/>
    <property type="status" value="ALT_INIT"/>
    <property type="molecule type" value="Genomic_DNA"/>
</dbReference>
<dbReference type="RefSeq" id="WP_044010521.1">
    <property type="nucleotide sequence ID" value="NC_004545.1"/>
</dbReference>
<dbReference type="SMR" id="Q89AM4"/>
<dbReference type="STRING" id="224915.bbp_243"/>
<dbReference type="KEGG" id="bab:bbp_243"/>
<dbReference type="eggNOG" id="COG2915">
    <property type="taxonomic scope" value="Bacteria"/>
</dbReference>
<dbReference type="HOGENOM" id="CLU_098920_0_0_6"/>
<dbReference type="OrthoDB" id="9788031at2"/>
<dbReference type="Proteomes" id="UP000000601">
    <property type="component" value="Chromosome"/>
</dbReference>
<dbReference type="GO" id="GO:0005737">
    <property type="term" value="C:cytoplasm"/>
    <property type="evidence" value="ECO:0007669"/>
    <property type="project" value="UniProtKB-SubCell"/>
</dbReference>
<dbReference type="GO" id="GO:0005886">
    <property type="term" value="C:plasma membrane"/>
    <property type="evidence" value="ECO:0007669"/>
    <property type="project" value="UniProtKB-SubCell"/>
</dbReference>
<dbReference type="Gene3D" id="1.10.3890.10">
    <property type="entry name" value="HflD-like"/>
    <property type="match status" value="1"/>
</dbReference>
<dbReference type="HAMAP" id="MF_00695">
    <property type="entry name" value="HflD_protein"/>
    <property type="match status" value="1"/>
</dbReference>
<dbReference type="InterPro" id="IPR007451">
    <property type="entry name" value="HflD"/>
</dbReference>
<dbReference type="InterPro" id="IPR035932">
    <property type="entry name" value="HflD-like_sf"/>
</dbReference>
<dbReference type="NCBIfam" id="NF001248">
    <property type="entry name" value="PRK00218.1-4"/>
    <property type="match status" value="1"/>
</dbReference>
<dbReference type="PANTHER" id="PTHR38100">
    <property type="entry name" value="HIGH FREQUENCY LYSOGENIZATION PROTEIN HFLD"/>
    <property type="match status" value="1"/>
</dbReference>
<dbReference type="PANTHER" id="PTHR38100:SF1">
    <property type="entry name" value="HIGH FREQUENCY LYSOGENIZATION PROTEIN HFLD"/>
    <property type="match status" value="1"/>
</dbReference>
<dbReference type="Pfam" id="PF04356">
    <property type="entry name" value="DUF489"/>
    <property type="match status" value="1"/>
</dbReference>
<dbReference type="SUPFAM" id="SSF101322">
    <property type="entry name" value="YcfC-like"/>
    <property type="match status" value="1"/>
</dbReference>
<accession>Q89AM4</accession>
<organism>
    <name type="scientific">Buchnera aphidicola subsp. Baizongia pistaciae (strain Bp)</name>
    <dbReference type="NCBI Taxonomy" id="224915"/>
    <lineage>
        <taxon>Bacteria</taxon>
        <taxon>Pseudomonadati</taxon>
        <taxon>Pseudomonadota</taxon>
        <taxon>Gammaproteobacteria</taxon>
        <taxon>Enterobacterales</taxon>
        <taxon>Erwiniaceae</taxon>
        <taxon>Buchnera</taxon>
    </lineage>
</organism>
<proteinExistence type="inferred from homology"/>
<comment type="subcellular location">
    <subcellularLocation>
        <location>Cytoplasm</location>
    </subcellularLocation>
    <subcellularLocation>
        <location evidence="1">Cell membrane</location>
        <topology evidence="1">Peripheral membrane protein</topology>
        <orientation evidence="1">Cytoplasmic side</orientation>
    </subcellularLocation>
</comment>
<comment type="similarity">
    <text evidence="1">Belongs to the HflD family.</text>
</comment>
<comment type="sequence caution" evidence="2">
    <conflict type="erroneous initiation">
        <sequence resource="EMBL-CDS" id="AAO26970"/>
    </conflict>
</comment>